<feature type="chain" id="PRO_0000228001" description="Alpha-globin transcription factor CP2">
    <location>
        <begin position="1"/>
        <end position="502"/>
    </location>
</feature>
<feature type="domain" description="Grh/CP2 DB" evidence="2">
    <location>
        <begin position="61"/>
        <end position="300"/>
    </location>
</feature>
<feature type="region of interest" description="DNA-binding">
    <location>
        <begin position="133"/>
        <end position="395"/>
    </location>
</feature>
<feature type="region of interest" description="Disordered" evidence="3">
    <location>
        <begin position="238"/>
        <end position="268"/>
    </location>
</feature>
<feature type="region of interest" description="Disordered" evidence="3">
    <location>
        <begin position="294"/>
        <end position="325"/>
    </location>
</feature>
<feature type="compositionally biased region" description="Basic and acidic residues" evidence="3">
    <location>
        <begin position="241"/>
        <end position="265"/>
    </location>
</feature>
<feature type="modified residue" description="Phosphoserine" evidence="16">
    <location>
        <position position="353"/>
    </location>
</feature>
<feature type="splice variant" id="VSP_017647" description="In isoform 2 and isoform 3." evidence="13 14">
    <location>
        <begin position="189"/>
        <end position="239"/>
    </location>
</feature>
<feature type="splice variant" id="VSP_017648" description="In isoform 2 and isoform 4." evidence="11 12 13">
    <location>
        <position position="491"/>
    </location>
</feature>
<feature type="mutagenesis site" description="Does not affect DNA-binding activity." evidence="8">
    <original>V</original>
    <variation>E</variation>
    <location>
        <position position="211"/>
    </location>
</feature>
<feature type="mutagenesis site" description="Does not affect DNA-binding activity." evidence="8">
    <original>I</original>
    <variation>R</variation>
    <location>
        <position position="213"/>
    </location>
</feature>
<feature type="mutagenesis site" description="Significant reduction of DNA-binding activity." evidence="8">
    <original>Q</original>
    <variation>L</variation>
    <location>
        <position position="234"/>
    </location>
</feature>
<feature type="mutagenesis site" description="Significant reduction of DNA-binding activity." evidence="8">
    <original>K</original>
    <variation>E</variation>
    <location>
        <position position="236"/>
    </location>
</feature>
<feature type="sequence conflict" description="In Ref. 1; M84810/AA sequence." evidence="15" ref="1">
    <original>G</original>
    <variation>A</variation>
    <location>
        <position position="92"/>
    </location>
</feature>
<feature type="sequence conflict" description="In Ref. 1; M84810/AA sequence." evidence="15" ref="1">
    <original>T</original>
    <variation>M</variation>
    <location>
        <position position="249"/>
    </location>
</feature>
<feature type="sequence conflict" description="In Ref. 3; AAA21324." evidence="15" ref="3">
    <original>A</original>
    <variation>Q</variation>
    <location>
        <position position="491"/>
    </location>
</feature>
<reference key="1">
    <citation type="journal article" date="1992" name="Mol. Cell. Biol.">
        <title>Molecular cloning of the alpha-globin transcription factor CP2.</title>
        <authorList>
            <person name="Lim L.C."/>
            <person name="Swendeman S.L."/>
            <person name="Sheffery M."/>
        </authorList>
    </citation>
    <scope>NUCLEOTIDE SEQUENCE [MRNA] (ISOFORM 4)</scope>
    <scope>PROTEIN SEQUENCE OF 129-140; 165-176; 348-358 AND 390-397</scope>
    <scope>FUNCTION</scope>
    <scope>SUBCELLULAR LOCATION</scope>
</reference>
<reference key="2">
    <citation type="journal article" date="1994" name="Mol. Cell. Biol.">
        <title>Characterization of a family of related cellular transcription factors which can modulate human immunodeficiency virus type 1 transcription in vitro.</title>
        <authorList>
            <person name="Yoon J.-B."/>
            <person name="Li G."/>
            <person name="Roeder R.G."/>
        </authorList>
    </citation>
    <scope>NUCLEOTIDE SEQUENCE [MRNA] (ISOFORM 1)</scope>
    <scope>NUCLEOTIDE SEQUENCE [MRNA] OF 61-502 (ISOFORM 3)</scope>
    <scope>DNA-BINDING</scope>
    <scope>SUBCELLULAR LOCATION</scope>
    <scope>ALTERNATIVE SPLICING</scope>
</reference>
<reference key="3">
    <citation type="journal article" date="1994" name="Mol. Cell. Biol.">
        <title>One exon of the human LSF gene includes conserved regions involved in novel DNA-binding and dimerization motifs.</title>
        <authorList>
            <person name="Shirra M.K."/>
            <person name="Zhu Q."/>
            <person name="Huang H.-C."/>
            <person name="Pallas D."/>
            <person name="Hansen U."/>
        </authorList>
    </citation>
    <scope>NUCLEOTIDE SEQUENCE [MRNA] (ISOFORMS 1 AND 2)</scope>
    <scope>PROTEIN SEQUENCE OF 7-21; 81-98; 149-164; 165-179; 348-359 AND 363-376</scope>
    <scope>FUNCTION</scope>
    <scope>ALTERNATIVE SPLICING</scope>
    <scope>MUTAGENESIS OF VAL-211; ILE-213; GLN-234 AND LYS-236</scope>
</reference>
<reference key="4">
    <citation type="journal article" date="2004" name="Nat. Genet.">
        <title>Complete sequencing and characterization of 21,243 full-length human cDNAs.</title>
        <authorList>
            <person name="Ota T."/>
            <person name="Suzuki Y."/>
            <person name="Nishikawa T."/>
            <person name="Otsuki T."/>
            <person name="Sugiyama T."/>
            <person name="Irie R."/>
            <person name="Wakamatsu A."/>
            <person name="Hayashi K."/>
            <person name="Sato H."/>
            <person name="Nagai K."/>
            <person name="Kimura K."/>
            <person name="Makita H."/>
            <person name="Sekine M."/>
            <person name="Obayashi M."/>
            <person name="Nishi T."/>
            <person name="Shibahara T."/>
            <person name="Tanaka T."/>
            <person name="Ishii S."/>
            <person name="Yamamoto J."/>
            <person name="Saito K."/>
            <person name="Kawai Y."/>
            <person name="Isono Y."/>
            <person name="Nakamura Y."/>
            <person name="Nagahari K."/>
            <person name="Murakami K."/>
            <person name="Yasuda T."/>
            <person name="Iwayanagi T."/>
            <person name="Wagatsuma M."/>
            <person name="Shiratori A."/>
            <person name="Sudo H."/>
            <person name="Hosoiri T."/>
            <person name="Kaku Y."/>
            <person name="Kodaira H."/>
            <person name="Kondo H."/>
            <person name="Sugawara M."/>
            <person name="Takahashi M."/>
            <person name="Kanda K."/>
            <person name="Yokoi T."/>
            <person name="Furuya T."/>
            <person name="Kikkawa E."/>
            <person name="Omura Y."/>
            <person name="Abe K."/>
            <person name="Kamihara K."/>
            <person name="Katsuta N."/>
            <person name="Sato K."/>
            <person name="Tanikawa M."/>
            <person name="Yamazaki M."/>
            <person name="Ninomiya K."/>
            <person name="Ishibashi T."/>
            <person name="Yamashita H."/>
            <person name="Murakawa K."/>
            <person name="Fujimori K."/>
            <person name="Tanai H."/>
            <person name="Kimata M."/>
            <person name="Watanabe M."/>
            <person name="Hiraoka S."/>
            <person name="Chiba Y."/>
            <person name="Ishida S."/>
            <person name="Ono Y."/>
            <person name="Takiguchi S."/>
            <person name="Watanabe S."/>
            <person name="Yosida M."/>
            <person name="Hotuta T."/>
            <person name="Kusano J."/>
            <person name="Kanehori K."/>
            <person name="Takahashi-Fujii A."/>
            <person name="Hara H."/>
            <person name="Tanase T.-O."/>
            <person name="Nomura Y."/>
            <person name="Togiya S."/>
            <person name="Komai F."/>
            <person name="Hara R."/>
            <person name="Takeuchi K."/>
            <person name="Arita M."/>
            <person name="Imose N."/>
            <person name="Musashino K."/>
            <person name="Yuuki H."/>
            <person name="Oshima A."/>
            <person name="Sasaki N."/>
            <person name="Aotsuka S."/>
            <person name="Yoshikawa Y."/>
            <person name="Matsunawa H."/>
            <person name="Ichihara T."/>
            <person name="Shiohata N."/>
            <person name="Sano S."/>
            <person name="Moriya S."/>
            <person name="Momiyama H."/>
            <person name="Satoh N."/>
            <person name="Takami S."/>
            <person name="Terashima Y."/>
            <person name="Suzuki O."/>
            <person name="Nakagawa S."/>
            <person name="Senoh A."/>
            <person name="Mizoguchi H."/>
            <person name="Goto Y."/>
            <person name="Shimizu F."/>
            <person name="Wakebe H."/>
            <person name="Hishigaki H."/>
            <person name="Watanabe T."/>
            <person name="Sugiyama A."/>
            <person name="Takemoto M."/>
            <person name="Kawakami B."/>
            <person name="Yamazaki M."/>
            <person name="Watanabe K."/>
            <person name="Kumagai A."/>
            <person name="Itakura S."/>
            <person name="Fukuzumi Y."/>
            <person name="Fujimori Y."/>
            <person name="Komiyama M."/>
            <person name="Tashiro H."/>
            <person name="Tanigami A."/>
            <person name="Fujiwara T."/>
            <person name="Ono T."/>
            <person name="Yamada K."/>
            <person name="Fujii Y."/>
            <person name="Ozaki K."/>
            <person name="Hirao M."/>
            <person name="Ohmori Y."/>
            <person name="Kawabata A."/>
            <person name="Hikiji T."/>
            <person name="Kobatake N."/>
            <person name="Inagaki H."/>
            <person name="Ikema Y."/>
            <person name="Okamoto S."/>
            <person name="Okitani R."/>
            <person name="Kawakami T."/>
            <person name="Noguchi S."/>
            <person name="Itoh T."/>
            <person name="Shigeta K."/>
            <person name="Senba T."/>
            <person name="Matsumura K."/>
            <person name="Nakajima Y."/>
            <person name="Mizuno T."/>
            <person name="Morinaga M."/>
            <person name="Sasaki M."/>
            <person name="Togashi T."/>
            <person name="Oyama M."/>
            <person name="Hata H."/>
            <person name="Watanabe M."/>
            <person name="Komatsu T."/>
            <person name="Mizushima-Sugano J."/>
            <person name="Satoh T."/>
            <person name="Shirai Y."/>
            <person name="Takahashi Y."/>
            <person name="Nakagawa K."/>
            <person name="Okumura K."/>
            <person name="Nagase T."/>
            <person name="Nomura N."/>
            <person name="Kikuchi H."/>
            <person name="Masuho Y."/>
            <person name="Yamashita R."/>
            <person name="Nakai K."/>
            <person name="Yada T."/>
            <person name="Nakamura Y."/>
            <person name="Ohara O."/>
            <person name="Isogai T."/>
            <person name="Sugano S."/>
        </authorList>
    </citation>
    <scope>NUCLEOTIDE SEQUENCE [LARGE SCALE MRNA] (ISOFORM 4)</scope>
    <source>
        <tissue>Teratocarcinoma</tissue>
    </source>
</reference>
<reference key="5">
    <citation type="submission" date="2005-07" db="EMBL/GenBank/DDBJ databases">
        <authorList>
            <person name="Mural R.J."/>
            <person name="Istrail S."/>
            <person name="Sutton G.G."/>
            <person name="Florea L."/>
            <person name="Halpern A.L."/>
            <person name="Mobarry C.M."/>
            <person name="Lippert R."/>
            <person name="Walenz B."/>
            <person name="Shatkay H."/>
            <person name="Dew I."/>
            <person name="Miller J.R."/>
            <person name="Flanigan M.J."/>
            <person name="Edwards N.J."/>
            <person name="Bolanos R."/>
            <person name="Fasulo D."/>
            <person name="Halldorsson B.V."/>
            <person name="Hannenhalli S."/>
            <person name="Turner R."/>
            <person name="Yooseph S."/>
            <person name="Lu F."/>
            <person name="Nusskern D.R."/>
            <person name="Shue B.C."/>
            <person name="Zheng X.H."/>
            <person name="Zhong F."/>
            <person name="Delcher A.L."/>
            <person name="Huson D.H."/>
            <person name="Kravitz S.A."/>
            <person name="Mouchard L."/>
            <person name="Reinert K."/>
            <person name="Remington K.A."/>
            <person name="Clark A.G."/>
            <person name="Waterman M.S."/>
            <person name="Eichler E.E."/>
            <person name="Adams M.D."/>
            <person name="Hunkapiller M.W."/>
            <person name="Myers E.W."/>
            <person name="Venter J.C."/>
        </authorList>
    </citation>
    <scope>NUCLEOTIDE SEQUENCE [LARGE SCALE GENOMIC DNA]</scope>
</reference>
<reference key="6">
    <citation type="journal article" date="2004" name="Genome Res.">
        <title>The status, quality, and expansion of the NIH full-length cDNA project: the Mammalian Gene Collection (MGC).</title>
        <authorList>
            <consortium name="The MGC Project Team"/>
        </authorList>
    </citation>
    <scope>NUCLEOTIDE SEQUENCE [LARGE SCALE MRNA] (ISOFORM 1)</scope>
    <source>
        <tissue>Muscle</tissue>
    </source>
</reference>
<reference key="7">
    <citation type="journal article" date="1994" name="J. Biol. Chem.">
        <title>Characterization of the genomic structure, chromosomal location, promoter, and development expression of the alpha-globin transcription factor CP2.</title>
        <authorList>
            <person name="Swendeman S.L."/>
            <person name="Spielholz C."/>
            <person name="Jenkins N.A."/>
            <person name="Gilbert D.J."/>
            <person name="Copeland N.G."/>
            <person name="Sheffery M."/>
        </authorList>
    </citation>
    <scope>FUNCTION</scope>
    <scope>TISSUE SPECIFICITY</scope>
    <scope>DEVELOPMENTAL STAGE</scope>
</reference>
<reference key="8">
    <citation type="journal article" date="1995" name="EMBO J.">
        <title>Hemoglobin switching in man and chicken is mediated by a heteromeric complex between the ubiquitous transcription factor CP2 and a developmentally specific protein.</title>
        <authorList>
            <person name="Jane S.M."/>
            <person name="Nienhuis A.W."/>
            <person name="Cunningham J.M."/>
        </authorList>
    </citation>
    <scope>IDENTIFICATION IN THE SSP COMPLEX</scope>
    <scope>TISSUE SPECIFICITY</scope>
    <scope>SUBCELLULAR LOCATION</scope>
    <scope>DEVELOPMENTAL STAGE</scope>
</reference>
<reference key="9">
    <citation type="journal article" date="1995" name="EMBO J.">
        <authorList>
            <person name="Jane S.M."/>
            <person name="Nienhuis A.W."/>
            <person name="Cunningham J.M."/>
        </authorList>
    </citation>
    <scope>ERRATUM OF PUBMED:7828600</scope>
</reference>
<reference key="10">
    <citation type="journal article" date="1999" name="J. Biol. Chem.">
        <title>Purification and characterization of the serum amyloid A3 enhancer factor.</title>
        <authorList>
            <person name="Bing Z."/>
            <person name="Reddy S.A."/>
            <person name="Ren Y."/>
            <person name="Qin J."/>
            <person name="Liao W.S.-L."/>
        </authorList>
    </citation>
    <scope>FUNCTION</scope>
    <scope>TISSUE SPECIFICITY</scope>
</reference>
<reference key="11">
    <citation type="journal article" date="2000" name="Mol. Cell. Biol.">
        <title>Induction of human fetal globin gene expression by a novel erythroid factor, NF-E4.</title>
        <authorList>
            <person name="Zhou W."/>
            <person name="Clouston D.R."/>
            <person name="Wang X."/>
            <person name="Cerruti L."/>
            <person name="Cunningham J.M."/>
            <person name="Jane S.M."/>
        </authorList>
    </citation>
    <scope>INTERACTION WITH NFE4</scope>
</reference>
<reference key="12">
    <citation type="journal article" date="2011" name="BMC Syst. Biol.">
        <title>Initial characterization of the human central proteome.</title>
        <authorList>
            <person name="Burkard T.R."/>
            <person name="Planyavsky M."/>
            <person name="Kaupe I."/>
            <person name="Breitwieser F.P."/>
            <person name="Buerckstuemmer T."/>
            <person name="Bennett K.L."/>
            <person name="Superti-Furga G."/>
            <person name="Colinge J."/>
        </authorList>
    </citation>
    <scope>IDENTIFICATION BY MASS SPECTROMETRY [LARGE SCALE ANALYSIS]</scope>
</reference>
<reference key="13">
    <citation type="journal article" date="2014" name="J. Proteomics">
        <title>An enzyme assisted RP-RPLC approach for in-depth analysis of human liver phosphoproteome.</title>
        <authorList>
            <person name="Bian Y."/>
            <person name="Song C."/>
            <person name="Cheng K."/>
            <person name="Dong M."/>
            <person name="Wang F."/>
            <person name="Huang J."/>
            <person name="Sun D."/>
            <person name="Wang L."/>
            <person name="Ye M."/>
            <person name="Zou H."/>
        </authorList>
    </citation>
    <scope>PHOSPHORYLATION [LARGE SCALE ANALYSIS] AT SER-353</scope>
    <scope>IDENTIFICATION BY MASS SPECTROMETRY [LARGE SCALE ANALYSIS]</scope>
    <source>
        <tissue>Liver</tissue>
    </source>
</reference>
<proteinExistence type="evidence at protein level"/>
<organism>
    <name type="scientific">Homo sapiens</name>
    <name type="common">Human</name>
    <dbReference type="NCBI Taxonomy" id="9606"/>
    <lineage>
        <taxon>Eukaryota</taxon>
        <taxon>Metazoa</taxon>
        <taxon>Chordata</taxon>
        <taxon>Craniata</taxon>
        <taxon>Vertebrata</taxon>
        <taxon>Euteleostomi</taxon>
        <taxon>Mammalia</taxon>
        <taxon>Eutheria</taxon>
        <taxon>Euarchontoglires</taxon>
        <taxon>Primates</taxon>
        <taxon>Haplorrhini</taxon>
        <taxon>Catarrhini</taxon>
        <taxon>Hominidae</taxon>
        <taxon>Homo</taxon>
    </lineage>
</organism>
<comment type="function">
    <text evidence="1 4 6 8 10">Binds a variety of cellular and viral promoters including fibrinogen, alpha-globin, SV40 and HIV-1 promoters. Activation of the alpha-globin promoter in erythroid cells is via synergistic interaction with UBP1 (By similarity). Functions as part of the SSP (stage selector protein) complex. Facilitates the interaction of the gamma-globin genes with enhancer elements contained in the locus control region in fetal erythroid cells. Interacts by binding to the stage selector element (SSE) in the proximal gamma-globin promoter.</text>
</comment>
<comment type="subunit">
    <text evidence="1 5 7">Binds to DNA as a dimer, isoform 3 does not bind to DNA or affect the binding of isoform 1 to DNA. Interacts with UBP1 and PIAS1, and is probably part of a complex containing TFCP2, UBP1 and PIAS1 (By similarity). Component of the SSP (stage selector protein) complex, which appears to be a heteromer of TFCP2 and 2 copies of NFE4.</text>
</comment>
<comment type="interaction">
    <interactant intactId="EBI-717422">
        <id>Q12800</id>
    </interactant>
    <interactant intactId="EBI-3926709">
        <id>P09110</id>
        <label>ACAA1</label>
    </interactant>
    <organismsDiffer>false</organismsDiffer>
    <experiments>3</experiments>
</comment>
<comment type="interaction">
    <interactant intactId="EBI-717422">
        <id>Q12800</id>
    </interactant>
    <interactant intactId="EBI-6657604">
        <id>P54922</id>
        <label>ADPRH</label>
    </interactant>
    <organismsDiffer>false</organismsDiffer>
    <experiments>3</experiments>
</comment>
<comment type="interaction">
    <interactant intactId="EBI-717422">
        <id>Q12800</id>
    </interactant>
    <interactant intactId="EBI-2609717">
        <id>Q8TDY4</id>
        <label>ASAP3</label>
    </interactant>
    <organismsDiffer>false</organismsDiffer>
    <experiments>3</experiments>
</comment>
<comment type="interaction">
    <interactant intactId="EBI-717422">
        <id>Q12800</id>
    </interactant>
    <interactant intactId="EBI-347552">
        <id>P46379</id>
        <label>BAG6</label>
    </interactant>
    <organismsDiffer>false</organismsDiffer>
    <experiments>3</experiments>
</comment>
<comment type="interaction">
    <interactant intactId="EBI-717422">
        <id>Q12800</id>
    </interactant>
    <interactant intactId="EBI-2859285">
        <id>Q9NVV2</id>
        <label>C19orf73</label>
    </interactant>
    <organismsDiffer>false</organismsDiffer>
    <experiments>3</experiments>
</comment>
<comment type="interaction">
    <interactant intactId="EBI-717422">
        <id>Q12800</id>
    </interactant>
    <interactant intactId="EBI-3912102">
        <id>P00915</id>
        <label>CA1</label>
    </interactant>
    <organismsDiffer>false</organismsDiffer>
    <experiments>6</experiments>
</comment>
<comment type="interaction">
    <interactant intactId="EBI-717422">
        <id>Q12800</id>
    </interactant>
    <interactant intactId="EBI-16430532">
        <id>A0A0S2Z3E6</id>
        <label>CAPN3</label>
    </interactant>
    <organismsDiffer>false</organismsDiffer>
    <experiments>3</experiments>
</comment>
<comment type="interaction">
    <interactant intactId="EBI-717422">
        <id>Q12800</id>
    </interactant>
    <interactant intactId="EBI-16433991">
        <id>P20807-2</id>
        <label>CAPN3</label>
    </interactant>
    <organismsDiffer>false</organismsDiffer>
    <experiments>3</experiments>
</comment>
<comment type="interaction">
    <interactant intactId="EBI-717422">
        <id>Q12800</id>
    </interactant>
    <interactant intactId="EBI-712912">
        <id>Q9HC52</id>
        <label>CBX8</label>
    </interactant>
    <organismsDiffer>false</organismsDiffer>
    <experiments>6</experiments>
</comment>
<comment type="interaction">
    <interactant intactId="EBI-717422">
        <id>Q12800</id>
    </interactant>
    <interactant intactId="EBI-930143">
        <id>Q6P1J9</id>
        <label>CDC73</label>
    </interactant>
    <organismsDiffer>false</organismsDiffer>
    <experiments>8</experiments>
</comment>
<comment type="interaction">
    <interactant intactId="EBI-717422">
        <id>Q12800</id>
    </interactant>
    <interactant intactId="EBI-10317544">
        <id>Q9NZQ0</id>
        <label>DNAJC27</label>
    </interactant>
    <organismsDiffer>false</organismsDiffer>
    <experiments>6</experiments>
</comment>
<comment type="interaction">
    <interactant intactId="EBI-717422">
        <id>Q12800</id>
    </interactant>
    <interactant intactId="EBI-10320535">
        <id>Q9UF47</id>
        <label>DNAJC5B</label>
    </interactant>
    <organismsDiffer>false</organismsDiffer>
    <experiments>3</experiments>
</comment>
<comment type="interaction">
    <interactant intactId="EBI-717422">
        <id>Q12800</id>
    </interactant>
    <interactant intactId="EBI-10303200">
        <id>Q9BZG8</id>
        <label>DPH1</label>
    </interactant>
    <organismsDiffer>false</organismsDiffer>
    <experiments>3</experiments>
</comment>
<comment type="interaction">
    <interactant intactId="EBI-717422">
        <id>Q12800</id>
    </interactant>
    <interactant intactId="EBI-7779316">
        <id>A0AVK6</id>
        <label>E2F8</label>
    </interactant>
    <organismsDiffer>false</organismsDiffer>
    <experiments>3</experiments>
</comment>
<comment type="interaction">
    <interactant intactId="EBI-717422">
        <id>Q12800</id>
    </interactant>
    <interactant intactId="EBI-769261">
        <id>Q96JC9</id>
        <label>EAF1</label>
    </interactant>
    <organismsDiffer>false</organismsDiffer>
    <experiments>3</experiments>
</comment>
<comment type="interaction">
    <interactant intactId="EBI-717422">
        <id>Q12800</id>
    </interactant>
    <interactant intactId="EBI-6137508">
        <id>Q8N5A0</id>
        <label>EIF5B</label>
    </interactant>
    <organismsDiffer>false</organismsDiffer>
    <experiments>3</experiments>
</comment>
<comment type="interaction">
    <interactant intactId="EBI-717422">
        <id>Q12800</id>
    </interactant>
    <interactant intactId="EBI-10244652">
        <id>Q5JZY3-3</id>
        <label>EPHA10</label>
    </interactant>
    <organismsDiffer>false</organismsDiffer>
    <experiments>3</experiments>
</comment>
<comment type="interaction">
    <interactant intactId="EBI-717422">
        <id>Q12800</id>
    </interactant>
    <interactant intactId="EBI-12259414">
        <id>Q92731-3</id>
        <label>ESR2</label>
    </interactant>
    <organismsDiffer>false</organismsDiffer>
    <experiments>3</experiments>
</comment>
<comment type="interaction">
    <interactant intactId="EBI-717422">
        <id>Q12800</id>
    </interactant>
    <interactant intactId="EBI-2339898">
        <id>Q9NW38</id>
        <label>FANCL</label>
    </interactant>
    <organismsDiffer>false</organismsDiffer>
    <experiments>3</experiments>
</comment>
<comment type="interaction">
    <interactant intactId="EBI-717422">
        <id>Q12800</id>
    </interactant>
    <interactant intactId="EBI-2513774">
        <id>O95363</id>
        <label>FARS2</label>
    </interactant>
    <organismsDiffer>false</organismsDiffer>
    <experiments>3</experiments>
</comment>
<comment type="interaction">
    <interactant intactId="EBI-717422">
        <id>Q12800</id>
    </interactant>
    <interactant intactId="EBI-744419">
        <id>Q96D16</id>
        <label>FBXL18</label>
    </interactant>
    <organismsDiffer>false</organismsDiffer>
    <experiments>3</experiments>
</comment>
<comment type="interaction">
    <interactant intactId="EBI-717422">
        <id>Q12800</id>
    </interactant>
    <interactant intactId="EBI-751540">
        <id>O95872</id>
        <label>GPANK1</label>
    </interactant>
    <organismsDiffer>false</organismsDiffer>
    <experiments>3</experiments>
</comment>
<comment type="interaction">
    <interactant intactId="EBI-717422">
        <id>Q12800</id>
    </interactant>
    <interactant intactId="EBI-11956675">
        <id>Q9GZV7</id>
        <label>HAPLN2</label>
    </interactant>
    <organismsDiffer>false</organismsDiffer>
    <experiments>3</experiments>
</comment>
<comment type="interaction">
    <interactant intactId="EBI-717422">
        <id>Q12800</id>
    </interactant>
    <interactant intactId="EBI-9658404">
        <id>Q5VVH5</id>
        <label>IRAK1BP1</label>
    </interactant>
    <organismsDiffer>false</organismsDiffer>
    <experiments>3</experiments>
</comment>
<comment type="interaction">
    <interactant intactId="EBI-717422">
        <id>Q12800</id>
    </interactant>
    <interactant intactId="EBI-9679267">
        <id>Q70IA8</id>
        <label>MOB3C</label>
    </interactant>
    <organismsDiffer>false</organismsDiffer>
    <experiments>3</experiments>
</comment>
<comment type="interaction">
    <interactant intactId="EBI-717422">
        <id>Q12800</id>
    </interactant>
    <interactant intactId="EBI-399246">
        <id>Q9UBU8</id>
        <label>MORF4L1</label>
    </interactant>
    <organismsDiffer>false</organismsDiffer>
    <experiments>3</experiments>
</comment>
<comment type="interaction">
    <interactant intactId="EBI-717422">
        <id>Q12800</id>
    </interactant>
    <interactant intactId="EBI-10288852">
        <id>Q9UBU8-2</id>
        <label>MORF4L1</label>
    </interactant>
    <organismsDiffer>false</organismsDiffer>
    <experiments>3</experiments>
</comment>
<comment type="interaction">
    <interactant intactId="EBI-717422">
        <id>Q12800</id>
    </interactant>
    <interactant intactId="EBI-5453723">
        <id>Q9Y3B7</id>
        <label>MRPL11</label>
    </interactant>
    <organismsDiffer>false</organismsDiffer>
    <experiments>3</experiments>
</comment>
<comment type="interaction">
    <interactant intactId="EBI-717422">
        <id>Q12800</id>
    </interactant>
    <interactant intactId="EBI-1053902">
        <id>Q9NQ50</id>
        <label>MRPL40</label>
    </interactant>
    <organismsDiffer>false</organismsDiffer>
    <experiments>3</experiments>
</comment>
<comment type="interaction">
    <interactant intactId="EBI-717422">
        <id>Q12800</id>
    </interactant>
    <interactant intactId="EBI-2889252">
        <id>Q96AH0</id>
        <label>NABP1</label>
    </interactant>
    <organismsDiffer>false</organismsDiffer>
    <experiments>3</experiments>
</comment>
<comment type="interaction">
    <interactant intactId="EBI-717422">
        <id>Q12800</id>
    </interactant>
    <interactant intactId="EBI-2859639">
        <id>Q5HYW2</id>
        <label>NHSL2</label>
    </interactant>
    <organismsDiffer>false</organismsDiffer>
    <experiments>3</experiments>
</comment>
<comment type="interaction">
    <interactant intactId="EBI-717422">
        <id>Q12800</id>
    </interactant>
    <interactant intactId="EBI-10269715">
        <id>Q8NDH3-4</id>
        <label>NPEPL1</label>
    </interactant>
    <organismsDiffer>false</organismsDiffer>
    <experiments>3</experiments>
</comment>
<comment type="interaction">
    <interactant intactId="EBI-717422">
        <id>Q12800</id>
    </interactant>
    <interactant intactId="EBI-530034">
        <id>O43189</id>
        <label>PHF1</label>
    </interactant>
    <organismsDiffer>false</organismsDiffer>
    <experiments>4</experiments>
</comment>
<comment type="interaction">
    <interactant intactId="EBI-717422">
        <id>Q12800</id>
    </interactant>
    <interactant intactId="EBI-16434035">
        <id>A0A0S2Z615</id>
        <label>PHF21B</label>
    </interactant>
    <organismsDiffer>false</organismsDiffer>
    <experiments>3</experiments>
</comment>
<comment type="interaction">
    <interactant intactId="EBI-717422">
        <id>Q12800</id>
    </interactant>
    <interactant intactId="EBI-2568609">
        <id>Q9BSJ6</id>
        <label>PIMREG</label>
    </interactant>
    <organismsDiffer>false</organismsDiffer>
    <experiments>3</experiments>
</comment>
<comment type="interaction">
    <interactant intactId="EBI-717422">
        <id>Q12800</id>
    </interactant>
    <interactant intactId="EBI-2861268">
        <id>O00562</id>
        <label>PITPNM1</label>
    </interactant>
    <organismsDiffer>false</organismsDiffer>
    <experiments>3</experiments>
</comment>
<comment type="interaction">
    <interactant intactId="EBI-717422">
        <id>Q12800</id>
    </interactant>
    <interactant intactId="EBI-3396023">
        <id>Q9NQ66</id>
        <label>PLCB1</label>
    </interactant>
    <organismsDiffer>false</organismsDiffer>
    <experiments>3</experiments>
</comment>
<comment type="interaction">
    <interactant intactId="EBI-717422">
        <id>Q12800</id>
    </interactant>
    <interactant intactId="EBI-10320765">
        <id>Q9UGP5-2</id>
        <label>POLL</label>
    </interactant>
    <organismsDiffer>false</organismsDiffer>
    <experiments>3</experiments>
</comment>
<comment type="interaction">
    <interactant intactId="EBI-717422">
        <id>Q12800</id>
    </interactant>
    <interactant intactId="EBI-2855862">
        <id>Q9BT43</id>
        <label>POLR3GL</label>
    </interactant>
    <organismsDiffer>false</organismsDiffer>
    <experiments>3</experiments>
</comment>
<comment type="interaction">
    <interactant intactId="EBI-717422">
        <id>Q12800</id>
    </interactant>
    <interactant intactId="EBI-396072">
        <id>Q13427</id>
        <label>PPIG</label>
    </interactant>
    <organismsDiffer>false</organismsDiffer>
    <experiments>3</experiments>
</comment>
<comment type="interaction">
    <interactant intactId="EBI-717422">
        <id>Q12800</id>
    </interactant>
    <interactant intactId="EBI-722119">
        <id>Q9UD71</id>
        <label>PPP1R1B</label>
    </interactant>
    <organismsDiffer>false</organismsDiffer>
    <experiments>3</experiments>
</comment>
<comment type="interaction">
    <interactant intactId="EBI-717422">
        <id>Q12800</id>
    </interactant>
    <interactant intactId="EBI-3906025">
        <id>Q96LZ3</id>
        <label>PPP3R2</label>
    </interactant>
    <organismsDiffer>false</organismsDiffer>
    <experiments>3</experiments>
</comment>
<comment type="interaction">
    <interactant intactId="EBI-717422">
        <id>Q12800</id>
    </interactant>
    <interactant intactId="EBI-752143">
        <id>Q16401</id>
        <label>PSMD5</label>
    </interactant>
    <organismsDiffer>false</organismsDiffer>
    <experiments>3</experiments>
</comment>
<comment type="interaction">
    <interactant intactId="EBI-717422">
        <id>Q12800</id>
    </interactant>
    <interactant intactId="EBI-5462600">
        <id>P29558</id>
        <label>RBMS1</label>
    </interactant>
    <organismsDiffer>false</organismsDiffer>
    <experiments>3</experiments>
</comment>
<comment type="interaction">
    <interactant intactId="EBI-717422">
        <id>Q12800</id>
    </interactant>
    <interactant intactId="EBI-16429492">
        <id>P28702-3</id>
        <label>RXRB</label>
    </interactant>
    <organismsDiffer>false</organismsDiffer>
    <experiments>3</experiments>
</comment>
<comment type="interaction">
    <interactant intactId="EBI-717422">
        <id>Q12800</id>
    </interactant>
    <interactant intactId="EBI-727004">
        <id>O00560</id>
        <label>SDCBP</label>
    </interactant>
    <organismsDiffer>false</organismsDiffer>
    <experiments>3</experiments>
</comment>
<comment type="interaction">
    <interactant intactId="EBI-717422">
        <id>Q12800</id>
    </interactant>
    <interactant intactId="EBI-10171490">
        <id>A0MZ66-7</id>
        <label>SHTN1</label>
    </interactant>
    <organismsDiffer>false</organismsDiffer>
    <experiments>3</experiments>
</comment>
<comment type="interaction">
    <interactant intactId="EBI-717422">
        <id>Q12800</id>
    </interactant>
    <interactant intactId="EBI-714194">
        <id>Q93045</id>
        <label>STMN2</label>
    </interactant>
    <organismsDiffer>false</organismsDiffer>
    <experiments>3</experiments>
</comment>
<comment type="interaction">
    <interactant intactId="EBI-717422">
        <id>Q12800</id>
    </interactant>
    <interactant intactId="EBI-80140">
        <id>P63165</id>
        <label>SUMO1</label>
    </interactant>
    <organismsDiffer>false</organismsDiffer>
    <experiments>3</experiments>
</comment>
<comment type="interaction">
    <interactant intactId="EBI-717422">
        <id>Q12800</id>
    </interactant>
    <interactant intactId="EBI-710310">
        <id>Q15560</id>
        <label>TCEA2</label>
    </interactant>
    <organismsDiffer>false</organismsDiffer>
    <experiments>3</experiments>
</comment>
<comment type="interaction">
    <interactant intactId="EBI-717422">
        <id>Q12800</id>
    </interactant>
    <interactant intactId="EBI-10301451">
        <id>Q9BXT4-2</id>
        <label>TDRD1</label>
    </interactant>
    <organismsDiffer>false</organismsDiffer>
    <experiments>3</experiments>
</comment>
<comment type="interaction">
    <interactant intactId="EBI-717422">
        <id>Q12800</id>
    </interactant>
    <interactant intactId="EBI-740492">
        <id>Q9UKI8</id>
        <label>TLK1</label>
    </interactant>
    <organismsDiffer>false</organismsDiffer>
    <experiments>3</experiments>
</comment>
<comment type="interaction">
    <interactant intactId="EBI-717422">
        <id>Q12800</id>
    </interactant>
    <interactant intactId="EBI-10242701">
        <id>Q53QD4</id>
        <label>TRAPPC12</label>
    </interactant>
    <organismsDiffer>false</organismsDiffer>
    <experiments>3</experiments>
</comment>
<comment type="interaction">
    <interactant intactId="EBI-717422">
        <id>Q12800</id>
    </interactant>
    <interactant intactId="EBI-2466403">
        <id>O95859</id>
        <label>TSPAN12</label>
    </interactant>
    <organismsDiffer>false</organismsDiffer>
    <experiments>3</experiments>
</comment>
<comment type="interaction">
    <interactant intactId="EBI-717422">
        <id>Q12800</id>
    </interactant>
    <interactant intactId="EBI-80168">
        <id>P63279</id>
        <label>UBE2I</label>
    </interactant>
    <organismsDiffer>false</organismsDiffer>
    <experiments>4</experiments>
</comment>
<comment type="interaction">
    <interactant intactId="EBI-717422">
        <id>Q12800</id>
    </interactant>
    <interactant intactId="EBI-2795133">
        <id>Q9NZI7</id>
        <label>UBP1</label>
    </interactant>
    <organismsDiffer>false</organismsDiffer>
    <experiments>3</experiments>
</comment>
<comment type="interaction">
    <interactant intactId="EBI-717422">
        <id>Q12800</id>
    </interactant>
    <interactant intactId="EBI-10300345">
        <id>Q9BW85</id>
        <label>YJU2</label>
    </interactant>
    <organismsDiffer>false</organismsDiffer>
    <experiments>6</experiments>
</comment>
<comment type="interaction">
    <interactant intactId="EBI-717422">
        <id>Q12800</id>
    </interactant>
    <interactant intactId="EBI-597063">
        <id>Q8TBK6</id>
        <label>ZCCHC10</label>
    </interactant>
    <organismsDiffer>false</organismsDiffer>
    <experiments>4</experiments>
</comment>
<comment type="interaction">
    <interactant intactId="EBI-717422">
        <id>Q12800</id>
    </interactant>
    <interactant intactId="EBI-748373">
        <id>Q6PEW1</id>
        <label>ZCCHC12</label>
    </interactant>
    <organismsDiffer>false</organismsDiffer>
    <experiments>6</experiments>
</comment>
<comment type="subcellular location">
    <subcellularLocation>
        <location evidence="6 7 9">Nucleus</location>
    </subcellularLocation>
</comment>
<comment type="alternative products">
    <event type="alternative splicing"/>
    <isoform>
        <id>Q12800-1</id>
        <name>1</name>
        <name>LBP-1c</name>
        <sequence type="displayed"/>
    </isoform>
    <isoform>
        <id>Q12800-2</id>
        <name>2</name>
        <sequence type="described" ref="VSP_017647 VSP_017648"/>
    </isoform>
    <isoform>
        <id>Q12800-3</id>
        <name>3</name>
        <name>LBP-1d</name>
        <sequence type="described" ref="VSP_017647"/>
    </isoform>
    <isoform>
        <id>Q12800-4</id>
        <name>4</name>
        <sequence type="described" ref="VSP_017648"/>
    </isoform>
</comment>
<comment type="tissue specificity">
    <text evidence="4 7 10">Ubiquitous. Expressed in brain, ovary, kidney, thymus, spleen, liver, adrenal, heart and lung (at protein level).</text>
</comment>
<comment type="developmental stage">
    <text evidence="7 10">Expressed in fetal erythroid tissue.</text>
</comment>
<comment type="miscellaneous">
    <text>In PubMed:8114710 authors noted that a 10-fold molar excess of isoform 3 over isoform 1 inhibited DNA-binding.</text>
</comment>
<comment type="similarity">
    <text evidence="15">Belongs to the grh/CP2 family. CP2 subfamily.</text>
</comment>
<gene>
    <name type="primary">TFCP2</name>
    <name type="synonym">LSF</name>
    <name type="synonym">SEF</name>
</gene>
<name>TFCP2_HUMAN</name>
<evidence type="ECO:0000250" key="1"/>
<evidence type="ECO:0000255" key="2">
    <source>
        <dbReference type="PROSITE-ProRule" id="PRU01313"/>
    </source>
</evidence>
<evidence type="ECO:0000256" key="3">
    <source>
        <dbReference type="SAM" id="MobiDB-lite"/>
    </source>
</evidence>
<evidence type="ECO:0000269" key="4">
    <source>
    </source>
</evidence>
<evidence type="ECO:0000269" key="5">
    <source>
    </source>
</evidence>
<evidence type="ECO:0000269" key="6">
    <source>
    </source>
</evidence>
<evidence type="ECO:0000269" key="7">
    <source>
    </source>
</evidence>
<evidence type="ECO:0000269" key="8">
    <source>
    </source>
</evidence>
<evidence type="ECO:0000269" key="9">
    <source>
    </source>
</evidence>
<evidence type="ECO:0000269" key="10">
    <source>
    </source>
</evidence>
<evidence type="ECO:0000303" key="11">
    <source>
    </source>
</evidence>
<evidence type="ECO:0000303" key="12">
    <source>
    </source>
</evidence>
<evidence type="ECO:0000303" key="13">
    <source>
    </source>
</evidence>
<evidence type="ECO:0000303" key="14">
    <source>
    </source>
</evidence>
<evidence type="ECO:0000305" key="15"/>
<evidence type="ECO:0007744" key="16">
    <source>
    </source>
</evidence>
<dbReference type="EMBL" id="M84810">
    <property type="status" value="NOT_ANNOTATED_CDS"/>
    <property type="molecule type" value="mRNA"/>
</dbReference>
<dbReference type="EMBL" id="U03494">
    <property type="protein sequence ID" value="AAA21324.1"/>
    <property type="molecule type" value="mRNA"/>
</dbReference>
<dbReference type="EMBL" id="U03495">
    <property type="protein sequence ID" value="AAA21325.1"/>
    <property type="molecule type" value="mRNA"/>
</dbReference>
<dbReference type="EMBL" id="AK291264">
    <property type="protein sequence ID" value="BAF83953.1"/>
    <property type="molecule type" value="mRNA"/>
</dbReference>
<dbReference type="EMBL" id="CH471111">
    <property type="protein sequence ID" value="EAW58178.1"/>
    <property type="molecule type" value="Genomic_DNA"/>
</dbReference>
<dbReference type="EMBL" id="BC003634">
    <property type="protein sequence ID" value="AAH03634.1"/>
    <property type="molecule type" value="mRNA"/>
</dbReference>
<dbReference type="CCDS" id="CCDS55827.1">
    <molecule id="Q12800-2"/>
</dbReference>
<dbReference type="CCDS" id="CCDS8808.1">
    <molecule id="Q12800-1"/>
</dbReference>
<dbReference type="PIR" id="A42030">
    <property type="entry name" value="A42030"/>
</dbReference>
<dbReference type="PIR" id="A53771">
    <property type="entry name" value="A53771"/>
</dbReference>
<dbReference type="PIR" id="C56205">
    <property type="entry name" value="C56205"/>
</dbReference>
<dbReference type="RefSeq" id="NP_001166923.1">
    <molecule id="Q12800-4"/>
    <property type="nucleotide sequence ID" value="NM_001173452.2"/>
</dbReference>
<dbReference type="RefSeq" id="NP_001166924.1">
    <molecule id="Q12800-2"/>
    <property type="nucleotide sequence ID" value="NM_001173453.2"/>
</dbReference>
<dbReference type="RefSeq" id="NP_005644.2">
    <molecule id="Q12800-1"/>
    <property type="nucleotide sequence ID" value="NM_005653.4"/>
</dbReference>
<dbReference type="SMR" id="Q12800"/>
<dbReference type="BioGRID" id="112882">
    <property type="interactions" value="454"/>
</dbReference>
<dbReference type="CORUM" id="Q12800"/>
<dbReference type="FunCoup" id="Q12800">
    <property type="interactions" value="3105"/>
</dbReference>
<dbReference type="IntAct" id="Q12800">
    <property type="interactions" value="144"/>
</dbReference>
<dbReference type="MINT" id="Q12800"/>
<dbReference type="STRING" id="9606.ENSP00000257915"/>
<dbReference type="GlyGen" id="Q12800">
    <property type="glycosylation" value="1 site, 1 O-linked glycan (1 site)"/>
</dbReference>
<dbReference type="iPTMnet" id="Q12800"/>
<dbReference type="PhosphoSitePlus" id="Q12800"/>
<dbReference type="BioMuta" id="TFCP2"/>
<dbReference type="DMDM" id="90101767"/>
<dbReference type="jPOST" id="Q12800"/>
<dbReference type="MassIVE" id="Q12800"/>
<dbReference type="PaxDb" id="9606-ENSP00000257915"/>
<dbReference type="PeptideAtlas" id="Q12800"/>
<dbReference type="ProteomicsDB" id="58951">
    <molecule id="Q12800-1"/>
</dbReference>
<dbReference type="ProteomicsDB" id="58952">
    <molecule id="Q12800-2"/>
</dbReference>
<dbReference type="ProteomicsDB" id="58953">
    <molecule id="Q12800-3"/>
</dbReference>
<dbReference type="ProteomicsDB" id="58954">
    <molecule id="Q12800-4"/>
</dbReference>
<dbReference type="Pumba" id="Q12800"/>
<dbReference type="Antibodypedia" id="26338">
    <property type="antibodies" value="208 antibodies from 31 providers"/>
</dbReference>
<dbReference type="DNASU" id="7024"/>
<dbReference type="Ensembl" id="ENST00000257915.10">
    <molecule id="Q12800-1"/>
    <property type="protein sequence ID" value="ENSP00000257915.5"/>
    <property type="gene ID" value="ENSG00000135457.11"/>
</dbReference>
<dbReference type="Ensembl" id="ENST00000548115.5">
    <molecule id="Q12800-2"/>
    <property type="protein sequence ID" value="ENSP00000447991.1"/>
    <property type="gene ID" value="ENSG00000135457.11"/>
</dbReference>
<dbReference type="GeneID" id="7024"/>
<dbReference type="KEGG" id="hsa:7024"/>
<dbReference type="MANE-Select" id="ENST00000257915.10">
    <property type="protein sequence ID" value="ENSP00000257915.5"/>
    <property type="RefSeq nucleotide sequence ID" value="NM_005653.5"/>
    <property type="RefSeq protein sequence ID" value="NP_005644.2"/>
</dbReference>
<dbReference type="UCSC" id="uc001rxw.4">
    <molecule id="Q12800-1"/>
    <property type="organism name" value="human"/>
</dbReference>
<dbReference type="AGR" id="HGNC:11748"/>
<dbReference type="CTD" id="7024"/>
<dbReference type="DisGeNET" id="7024"/>
<dbReference type="GeneCards" id="TFCP2"/>
<dbReference type="HGNC" id="HGNC:11748">
    <property type="gene designation" value="TFCP2"/>
</dbReference>
<dbReference type="HPA" id="ENSG00000135457">
    <property type="expression patterns" value="Low tissue specificity"/>
</dbReference>
<dbReference type="MalaCards" id="TFCP2"/>
<dbReference type="MIM" id="189889">
    <property type="type" value="gene"/>
</dbReference>
<dbReference type="neXtProt" id="NX_Q12800"/>
<dbReference type="OpenTargets" id="ENSG00000135457"/>
<dbReference type="PharmGKB" id="PA36463"/>
<dbReference type="VEuPathDB" id="HostDB:ENSG00000135457"/>
<dbReference type="eggNOG" id="KOG4091">
    <property type="taxonomic scope" value="Eukaryota"/>
</dbReference>
<dbReference type="GeneTree" id="ENSGT00940000157629"/>
<dbReference type="InParanoid" id="Q12800"/>
<dbReference type="OMA" id="XNLLPTT"/>
<dbReference type="OrthoDB" id="9996779at2759"/>
<dbReference type="PAN-GO" id="Q12800">
    <property type="GO annotations" value="4 GO annotations based on evolutionary models"/>
</dbReference>
<dbReference type="PhylomeDB" id="Q12800"/>
<dbReference type="TreeFam" id="TF314132"/>
<dbReference type="PathwayCommons" id="Q12800"/>
<dbReference type="SignaLink" id="Q12800"/>
<dbReference type="SIGNOR" id="Q12800"/>
<dbReference type="BioGRID-ORCS" id="7024">
    <property type="hits" value="10 hits in 1180 CRISPR screens"/>
</dbReference>
<dbReference type="ChiTaRS" id="TFCP2">
    <property type="organism name" value="human"/>
</dbReference>
<dbReference type="GeneWiki" id="TFCP2"/>
<dbReference type="GenomeRNAi" id="7024"/>
<dbReference type="Pharos" id="Q12800">
    <property type="development level" value="Tbio"/>
</dbReference>
<dbReference type="PRO" id="PR:Q12800"/>
<dbReference type="Proteomes" id="UP000005640">
    <property type="component" value="Chromosome 12"/>
</dbReference>
<dbReference type="RNAct" id="Q12800">
    <property type="molecule type" value="protein"/>
</dbReference>
<dbReference type="Bgee" id="ENSG00000135457">
    <property type="expression patterns" value="Expressed in mucosa of paranasal sinus and 202 other cell types or tissues"/>
</dbReference>
<dbReference type="ExpressionAtlas" id="Q12800">
    <property type="expression patterns" value="baseline and differential"/>
</dbReference>
<dbReference type="GO" id="GO:0000785">
    <property type="term" value="C:chromatin"/>
    <property type="evidence" value="ECO:0000247"/>
    <property type="project" value="NTNU_SB"/>
</dbReference>
<dbReference type="GO" id="GO:0005829">
    <property type="term" value="C:cytosol"/>
    <property type="evidence" value="ECO:0000314"/>
    <property type="project" value="HPA"/>
</dbReference>
<dbReference type="GO" id="GO:0005654">
    <property type="term" value="C:nucleoplasm"/>
    <property type="evidence" value="ECO:0000314"/>
    <property type="project" value="HPA"/>
</dbReference>
<dbReference type="GO" id="GO:0005634">
    <property type="term" value="C:nucleus"/>
    <property type="evidence" value="ECO:0000314"/>
    <property type="project" value="UniProtKB"/>
</dbReference>
<dbReference type="GO" id="GO:0032991">
    <property type="term" value="C:protein-containing complex"/>
    <property type="evidence" value="ECO:0000314"/>
    <property type="project" value="UniProtKB"/>
</dbReference>
<dbReference type="GO" id="GO:0000987">
    <property type="term" value="F:cis-regulatory region sequence-specific DNA binding"/>
    <property type="evidence" value="ECO:0000314"/>
    <property type="project" value="UniProtKB"/>
</dbReference>
<dbReference type="GO" id="GO:0003677">
    <property type="term" value="F:DNA binding"/>
    <property type="evidence" value="ECO:0000304"/>
    <property type="project" value="ProtInc"/>
</dbReference>
<dbReference type="GO" id="GO:0001228">
    <property type="term" value="F:DNA-binding transcription activator activity, RNA polymerase II-specific"/>
    <property type="evidence" value="ECO:0000318"/>
    <property type="project" value="GO_Central"/>
</dbReference>
<dbReference type="GO" id="GO:0003700">
    <property type="term" value="F:DNA-binding transcription factor activity"/>
    <property type="evidence" value="ECO:0000304"/>
    <property type="project" value="ProtInc"/>
</dbReference>
<dbReference type="GO" id="GO:0000981">
    <property type="term" value="F:DNA-binding transcription factor activity, RNA polymerase II-specific"/>
    <property type="evidence" value="ECO:0000247"/>
    <property type="project" value="NTNU_SB"/>
</dbReference>
<dbReference type="GO" id="GO:0000978">
    <property type="term" value="F:RNA polymerase II cis-regulatory region sequence-specific DNA binding"/>
    <property type="evidence" value="ECO:0000318"/>
    <property type="project" value="GO_Central"/>
</dbReference>
<dbReference type="GO" id="GO:1990837">
    <property type="term" value="F:sequence-specific double-stranded DNA binding"/>
    <property type="evidence" value="ECO:0000314"/>
    <property type="project" value="ARUK-UCL"/>
</dbReference>
<dbReference type="GO" id="GO:0008134">
    <property type="term" value="F:transcription factor binding"/>
    <property type="evidence" value="ECO:0000353"/>
    <property type="project" value="GO_Central"/>
</dbReference>
<dbReference type="GO" id="GO:0042789">
    <property type="term" value="P:mRNA transcription by RNA polymerase II"/>
    <property type="evidence" value="ECO:0000314"/>
    <property type="project" value="UniProtKB"/>
</dbReference>
<dbReference type="GO" id="GO:0045944">
    <property type="term" value="P:positive regulation of transcription by RNA polymerase II"/>
    <property type="evidence" value="ECO:0000314"/>
    <property type="project" value="UniProtKB"/>
</dbReference>
<dbReference type="GO" id="GO:0006357">
    <property type="term" value="P:regulation of transcription by RNA polymerase II"/>
    <property type="evidence" value="ECO:0000314"/>
    <property type="project" value="UniProtKB"/>
</dbReference>
<dbReference type="CDD" id="cd09589">
    <property type="entry name" value="SAM_TFCP2"/>
    <property type="match status" value="1"/>
</dbReference>
<dbReference type="FunFam" id="1.10.150.50:FF:000022">
    <property type="entry name" value="Transcription factor CP2 like 1"/>
    <property type="match status" value="1"/>
</dbReference>
<dbReference type="Gene3D" id="1.10.150.50">
    <property type="entry name" value="Transcription Factor, Ets-1"/>
    <property type="match status" value="1"/>
</dbReference>
<dbReference type="InterPro" id="IPR007604">
    <property type="entry name" value="CP2"/>
</dbReference>
<dbReference type="InterPro" id="IPR013761">
    <property type="entry name" value="SAM/pointed_sf"/>
</dbReference>
<dbReference type="InterPro" id="IPR041418">
    <property type="entry name" value="SAM_3"/>
</dbReference>
<dbReference type="InterPro" id="IPR040167">
    <property type="entry name" value="TF_CP2-like"/>
</dbReference>
<dbReference type="InterPro" id="IPR037599">
    <property type="entry name" value="TFCP2_SAM"/>
</dbReference>
<dbReference type="PANTHER" id="PTHR11037:SF11">
    <property type="entry name" value="ALPHA-GLOBIN TRANSCRIPTION FACTOR CP2"/>
    <property type="match status" value="1"/>
</dbReference>
<dbReference type="PANTHER" id="PTHR11037">
    <property type="entry name" value="TRANSCRIPTION FACTOR CP2"/>
    <property type="match status" value="1"/>
</dbReference>
<dbReference type="Pfam" id="PF04516">
    <property type="entry name" value="CP2"/>
    <property type="match status" value="1"/>
</dbReference>
<dbReference type="Pfam" id="PF25416">
    <property type="entry name" value="GRHL1_C"/>
    <property type="match status" value="1"/>
</dbReference>
<dbReference type="Pfam" id="PF18016">
    <property type="entry name" value="SAM_3"/>
    <property type="match status" value="1"/>
</dbReference>
<dbReference type="SUPFAM" id="SSF47769">
    <property type="entry name" value="SAM/Pointed domain"/>
    <property type="match status" value="1"/>
</dbReference>
<dbReference type="PROSITE" id="PS51968">
    <property type="entry name" value="GRH_CP2_DB"/>
    <property type="match status" value="1"/>
</dbReference>
<protein>
    <recommendedName>
        <fullName>Alpha-globin transcription factor CP2</fullName>
    </recommendedName>
    <alternativeName>
        <fullName>SAA3 enhancer factor</fullName>
    </alternativeName>
    <alternativeName>
        <fullName>Transcription factor LSF</fullName>
    </alternativeName>
</protein>
<accession>Q12800</accession>
<accession>A8K5E9</accession>
<accession>Q12801</accession>
<accession>Q9UD75</accession>
<accession>Q9UD77</accession>
<sequence>MAWALKLPLADEVIESGLVQDFDASLSGIGQELGAGAYSMSDVLALPIFKQEESSLPPDNENKILPFQYVLCAATSPAVKLHDETLTYLNQGQSYEIRMLDNRKLGELPEINGKLVKSIFRVVFHDRRLQYTEHQQLEGWRWNRPGDRILDIDIPMSVGIIDPRANPTQLNTVEFLWDPAKRTSVFIQVHCISTEFTMRKHGGEKGVPFRVQIDTFKENENGEYTEHLHSASCQIKVFKPKGADRKQKTDREKMEKRTPHEKEKYQPSYETTILTECSPWPEITYVNNSPSPGFNSSHSSFSLGEGNGSPNHQPEPPPPVTDNLLPTTTPQEAQQWLHRNRFSTFTRLFTNFSGADLLKLTRDDVIQICGPADGIRLFNALKGRMVRPRLTIYVCQESLQLREQQQQQQQQQQKHEDGDSNGTFFVYHAIYLEELTAVELTEKIAQLFSISPCQISQIYKQGPTGIHVLISDEMIQNFQEEACFILDTMKAETNDSYHIILK</sequence>
<keyword id="KW-0025">Alternative splicing</keyword>
<keyword id="KW-0903">Direct protein sequencing</keyword>
<keyword id="KW-0238">DNA-binding</keyword>
<keyword id="KW-0539">Nucleus</keyword>
<keyword id="KW-0597">Phosphoprotein</keyword>
<keyword id="KW-1267">Proteomics identification</keyword>
<keyword id="KW-1185">Reference proteome</keyword>
<keyword id="KW-0804">Transcription</keyword>
<keyword id="KW-0805">Transcription regulation</keyword>